<proteinExistence type="inferred from homology"/>
<gene>
    <name evidence="1" type="primary">deoA</name>
    <name type="ordered locus">SEN4329</name>
</gene>
<protein>
    <recommendedName>
        <fullName evidence="1">Thymidine phosphorylase</fullName>
        <ecNumber evidence="1">2.4.2.4</ecNumber>
    </recommendedName>
    <alternativeName>
        <fullName evidence="1">TdRPase</fullName>
    </alternativeName>
</protein>
<accession>B5R2J7</accession>
<dbReference type="EC" id="2.4.2.4" evidence="1"/>
<dbReference type="EMBL" id="AM933172">
    <property type="protein sequence ID" value="CAR35881.1"/>
    <property type="molecule type" value="Genomic_DNA"/>
</dbReference>
<dbReference type="RefSeq" id="WP_000477838.1">
    <property type="nucleotide sequence ID" value="NC_011294.1"/>
</dbReference>
<dbReference type="SMR" id="B5R2J7"/>
<dbReference type="KEGG" id="set:SEN4329"/>
<dbReference type="HOGENOM" id="CLU_025040_0_1_6"/>
<dbReference type="UniPathway" id="UPA00578">
    <property type="reaction ID" value="UER00638"/>
</dbReference>
<dbReference type="Proteomes" id="UP000000613">
    <property type="component" value="Chromosome"/>
</dbReference>
<dbReference type="GO" id="GO:0005829">
    <property type="term" value="C:cytosol"/>
    <property type="evidence" value="ECO:0007669"/>
    <property type="project" value="TreeGrafter"/>
</dbReference>
<dbReference type="GO" id="GO:0004645">
    <property type="term" value="F:1,4-alpha-oligoglucan phosphorylase activity"/>
    <property type="evidence" value="ECO:0007669"/>
    <property type="project" value="InterPro"/>
</dbReference>
<dbReference type="GO" id="GO:0009032">
    <property type="term" value="F:thymidine phosphorylase activity"/>
    <property type="evidence" value="ECO:0007669"/>
    <property type="project" value="UniProtKB-UniRule"/>
</dbReference>
<dbReference type="GO" id="GO:0006206">
    <property type="term" value="P:pyrimidine nucleobase metabolic process"/>
    <property type="evidence" value="ECO:0007669"/>
    <property type="project" value="InterPro"/>
</dbReference>
<dbReference type="GO" id="GO:0046104">
    <property type="term" value="P:thymidine metabolic process"/>
    <property type="evidence" value="ECO:0007669"/>
    <property type="project" value="UniProtKB-UniRule"/>
</dbReference>
<dbReference type="FunFam" id="3.40.1030.10:FF:000001">
    <property type="entry name" value="Thymidine phosphorylase"/>
    <property type="match status" value="1"/>
</dbReference>
<dbReference type="FunFam" id="3.90.1170.30:FF:000001">
    <property type="entry name" value="Thymidine phosphorylase"/>
    <property type="match status" value="1"/>
</dbReference>
<dbReference type="Gene3D" id="3.40.1030.10">
    <property type="entry name" value="Nucleoside phosphorylase/phosphoribosyltransferase catalytic domain"/>
    <property type="match status" value="1"/>
</dbReference>
<dbReference type="Gene3D" id="3.90.1170.30">
    <property type="entry name" value="Pyrimidine nucleoside phosphorylase-like, C-terminal domain"/>
    <property type="match status" value="1"/>
</dbReference>
<dbReference type="Gene3D" id="1.20.970.10">
    <property type="entry name" value="Transferase, Pyrimidine Nucleoside Phosphorylase, Chain C"/>
    <property type="match status" value="1"/>
</dbReference>
<dbReference type="HAMAP" id="MF_01628">
    <property type="entry name" value="Thymid_phosp"/>
    <property type="match status" value="1"/>
</dbReference>
<dbReference type="InterPro" id="IPR000312">
    <property type="entry name" value="Glycosyl_Trfase_fam3"/>
</dbReference>
<dbReference type="InterPro" id="IPR017459">
    <property type="entry name" value="Glycosyl_Trfase_fam3_N_dom"/>
</dbReference>
<dbReference type="InterPro" id="IPR036320">
    <property type="entry name" value="Glycosyl_Trfase_fam3_N_dom_sf"/>
</dbReference>
<dbReference type="InterPro" id="IPR035902">
    <property type="entry name" value="Nuc_phospho_transferase"/>
</dbReference>
<dbReference type="InterPro" id="IPR036566">
    <property type="entry name" value="PYNP-like_C_sf"/>
</dbReference>
<dbReference type="InterPro" id="IPR013102">
    <property type="entry name" value="PYNP_C"/>
</dbReference>
<dbReference type="InterPro" id="IPR018090">
    <property type="entry name" value="Pyrmidine_PPas_bac/euk"/>
</dbReference>
<dbReference type="InterPro" id="IPR017872">
    <property type="entry name" value="Pyrmidine_PPase_CS"/>
</dbReference>
<dbReference type="InterPro" id="IPR000053">
    <property type="entry name" value="Thymidine/pyrmidine_PPase"/>
</dbReference>
<dbReference type="InterPro" id="IPR013465">
    <property type="entry name" value="Thymidine_Pase"/>
</dbReference>
<dbReference type="NCBIfam" id="NF004490">
    <property type="entry name" value="PRK05820.1"/>
    <property type="match status" value="1"/>
</dbReference>
<dbReference type="NCBIfam" id="TIGR02643">
    <property type="entry name" value="T_phosphoryl"/>
    <property type="match status" value="1"/>
</dbReference>
<dbReference type="NCBIfam" id="TIGR02644">
    <property type="entry name" value="Y_phosphoryl"/>
    <property type="match status" value="1"/>
</dbReference>
<dbReference type="PANTHER" id="PTHR10515">
    <property type="entry name" value="THYMIDINE PHOSPHORYLASE"/>
    <property type="match status" value="1"/>
</dbReference>
<dbReference type="PANTHER" id="PTHR10515:SF0">
    <property type="entry name" value="THYMIDINE PHOSPHORYLASE"/>
    <property type="match status" value="1"/>
</dbReference>
<dbReference type="Pfam" id="PF02885">
    <property type="entry name" value="Glycos_trans_3N"/>
    <property type="match status" value="1"/>
</dbReference>
<dbReference type="Pfam" id="PF00591">
    <property type="entry name" value="Glycos_transf_3"/>
    <property type="match status" value="1"/>
</dbReference>
<dbReference type="Pfam" id="PF07831">
    <property type="entry name" value="PYNP_C"/>
    <property type="match status" value="1"/>
</dbReference>
<dbReference type="PIRSF" id="PIRSF000478">
    <property type="entry name" value="TP_PyNP"/>
    <property type="match status" value="1"/>
</dbReference>
<dbReference type="SMART" id="SM00941">
    <property type="entry name" value="PYNP_C"/>
    <property type="match status" value="1"/>
</dbReference>
<dbReference type="SUPFAM" id="SSF52418">
    <property type="entry name" value="Nucleoside phosphorylase/phosphoribosyltransferase catalytic domain"/>
    <property type="match status" value="1"/>
</dbReference>
<dbReference type="SUPFAM" id="SSF47648">
    <property type="entry name" value="Nucleoside phosphorylase/phosphoribosyltransferase N-terminal domain"/>
    <property type="match status" value="1"/>
</dbReference>
<dbReference type="SUPFAM" id="SSF54680">
    <property type="entry name" value="Pyrimidine nucleoside phosphorylase C-terminal domain"/>
    <property type="match status" value="1"/>
</dbReference>
<dbReference type="PROSITE" id="PS00647">
    <property type="entry name" value="THYMID_PHOSPHORYLASE"/>
    <property type="match status" value="1"/>
</dbReference>
<sequence>MFLAQEIIRKKRDGHALSDEEIRFFINGIRDNTISEGQIAALAMTIFFHDMTMPERVSLTMAMRDSGTVLDWKSLNLNGPIVDKHSTGGVGDVTSLMLGPMVAACGGYVPMISGRGLGHTGGTLDKLEAIPGFDIFPDDNRFREIIQDVGVAIIGQTSSLAPADKRFYATRDITATVDSIPLITGSILAKKLAEGLDALVMDVKVGSGAFMPTYELSEALAEAIVGVANGAGVRTTALLTDMNQVLASSAGNAVEVREAVQFLTGEYRNPRLFDVTMALCVEMLISGQLAKDDAEARAKLQAVLDNGKAAEVFGRMVAAQKGPSDFVENYDKYLPTAMLSKAVYADTEGFISAMDTRALGMAVVSMGGGRRQASDTIDYSVGFTDMARLGDSIDGQRPLAVIHAKDEASWQEAAKAVKAAIILDDKAPASTPSVYRRITE</sequence>
<feature type="chain" id="PRO_1000186267" description="Thymidine phosphorylase">
    <location>
        <begin position="1"/>
        <end position="440"/>
    </location>
</feature>
<keyword id="KW-0328">Glycosyltransferase</keyword>
<keyword id="KW-0808">Transferase</keyword>
<reference key="1">
    <citation type="journal article" date="2008" name="Genome Res.">
        <title>Comparative genome analysis of Salmonella enteritidis PT4 and Salmonella gallinarum 287/91 provides insights into evolutionary and host adaptation pathways.</title>
        <authorList>
            <person name="Thomson N.R."/>
            <person name="Clayton D.J."/>
            <person name="Windhorst D."/>
            <person name="Vernikos G."/>
            <person name="Davidson S."/>
            <person name="Churcher C."/>
            <person name="Quail M.A."/>
            <person name="Stevens M."/>
            <person name="Jones M.A."/>
            <person name="Watson M."/>
            <person name="Barron A."/>
            <person name="Layton A."/>
            <person name="Pickard D."/>
            <person name="Kingsley R.A."/>
            <person name="Bignell A."/>
            <person name="Clark L."/>
            <person name="Harris B."/>
            <person name="Ormond D."/>
            <person name="Abdellah Z."/>
            <person name="Brooks K."/>
            <person name="Cherevach I."/>
            <person name="Chillingworth T."/>
            <person name="Woodward J."/>
            <person name="Norberczak H."/>
            <person name="Lord A."/>
            <person name="Arrowsmith C."/>
            <person name="Jagels K."/>
            <person name="Moule S."/>
            <person name="Mungall K."/>
            <person name="Saunders M."/>
            <person name="Whitehead S."/>
            <person name="Chabalgoity J.A."/>
            <person name="Maskell D."/>
            <person name="Humphreys T."/>
            <person name="Roberts M."/>
            <person name="Barrow P.A."/>
            <person name="Dougan G."/>
            <person name="Parkhill J."/>
        </authorList>
    </citation>
    <scope>NUCLEOTIDE SEQUENCE [LARGE SCALE GENOMIC DNA]</scope>
    <source>
        <strain>P125109</strain>
    </source>
</reference>
<organism>
    <name type="scientific">Salmonella enteritidis PT4 (strain P125109)</name>
    <dbReference type="NCBI Taxonomy" id="550537"/>
    <lineage>
        <taxon>Bacteria</taxon>
        <taxon>Pseudomonadati</taxon>
        <taxon>Pseudomonadota</taxon>
        <taxon>Gammaproteobacteria</taxon>
        <taxon>Enterobacterales</taxon>
        <taxon>Enterobacteriaceae</taxon>
        <taxon>Salmonella</taxon>
    </lineage>
</organism>
<name>TYPH_SALEP</name>
<comment type="function">
    <text evidence="1">The enzymes which catalyze the reversible phosphorolysis of pyrimidine nucleosides are involved in the degradation of these compounds and in their utilization as carbon and energy sources, or in the rescue of pyrimidine bases for nucleotide synthesis.</text>
</comment>
<comment type="catalytic activity">
    <reaction evidence="1">
        <text>thymidine + phosphate = 2-deoxy-alpha-D-ribose 1-phosphate + thymine</text>
        <dbReference type="Rhea" id="RHEA:16037"/>
        <dbReference type="ChEBI" id="CHEBI:17748"/>
        <dbReference type="ChEBI" id="CHEBI:17821"/>
        <dbReference type="ChEBI" id="CHEBI:43474"/>
        <dbReference type="ChEBI" id="CHEBI:57259"/>
        <dbReference type="EC" id="2.4.2.4"/>
    </reaction>
</comment>
<comment type="pathway">
    <text evidence="1">Pyrimidine metabolism; dTMP biosynthesis via salvage pathway; dTMP from thymine: step 1/2.</text>
</comment>
<comment type="subunit">
    <text evidence="1">Homodimer.</text>
</comment>
<comment type="similarity">
    <text evidence="1">Belongs to the thymidine/pyrimidine-nucleoside phosphorylase family.</text>
</comment>
<evidence type="ECO:0000255" key="1">
    <source>
        <dbReference type="HAMAP-Rule" id="MF_01628"/>
    </source>
</evidence>